<geneLocation type="chloroplast"/>
<sequence length="73" mass="8619">MAIFRRKNSPIKKDDFIDYKDVELLSKFLTEQGKILPRRITGLTMKQQSRLTKAVKRARILSLLPFINRDMIL</sequence>
<gene>
    <name type="primary">rps18</name>
</gene>
<comment type="subunit">
    <text>Part of the 30S ribosomal subunit.</text>
</comment>
<comment type="subcellular location">
    <subcellularLocation>
        <location>Plastid</location>
        <location>Chloroplast</location>
    </subcellularLocation>
</comment>
<comment type="similarity">
    <text evidence="1">Belongs to the bacterial ribosomal protein bS18 family.</text>
</comment>
<proteinExistence type="inferred from homology"/>
<protein>
    <recommendedName>
        <fullName evidence="1">Small ribosomal subunit protein bS18c</fullName>
    </recommendedName>
    <alternativeName>
        <fullName>30S ribosomal protein S18, chloroplastic</fullName>
    </alternativeName>
</protein>
<feature type="chain" id="PRO_0000111286" description="Small ribosomal subunit protein bS18c">
    <location>
        <begin position="1"/>
        <end position="73"/>
    </location>
</feature>
<evidence type="ECO:0000305" key="1"/>
<keyword id="KW-0150">Chloroplast</keyword>
<keyword id="KW-0934">Plastid</keyword>
<keyword id="KW-0687">Ribonucleoprotein</keyword>
<keyword id="KW-0689">Ribosomal protein</keyword>
<keyword id="KW-0694">RNA-binding</keyword>
<keyword id="KW-0699">rRNA-binding</keyword>
<dbReference type="EMBL" id="AF041468">
    <property type="protein sequence ID" value="AAC35679.1"/>
    <property type="molecule type" value="Genomic_DNA"/>
</dbReference>
<dbReference type="RefSeq" id="NP_050745.1">
    <property type="nucleotide sequence ID" value="NC_000926.1"/>
</dbReference>
<dbReference type="SMR" id="O78488"/>
<dbReference type="GeneID" id="857050"/>
<dbReference type="HOGENOM" id="CLU_148710_2_3_1"/>
<dbReference type="OMA" id="NMKKARM"/>
<dbReference type="GO" id="GO:0009507">
    <property type="term" value="C:chloroplast"/>
    <property type="evidence" value="ECO:0007669"/>
    <property type="project" value="UniProtKB-SubCell"/>
</dbReference>
<dbReference type="GO" id="GO:1990904">
    <property type="term" value="C:ribonucleoprotein complex"/>
    <property type="evidence" value="ECO:0007669"/>
    <property type="project" value="UniProtKB-KW"/>
</dbReference>
<dbReference type="GO" id="GO:0005840">
    <property type="term" value="C:ribosome"/>
    <property type="evidence" value="ECO:0007669"/>
    <property type="project" value="UniProtKB-KW"/>
</dbReference>
<dbReference type="GO" id="GO:0070181">
    <property type="term" value="F:small ribosomal subunit rRNA binding"/>
    <property type="evidence" value="ECO:0007669"/>
    <property type="project" value="TreeGrafter"/>
</dbReference>
<dbReference type="GO" id="GO:0003735">
    <property type="term" value="F:structural constituent of ribosome"/>
    <property type="evidence" value="ECO:0007669"/>
    <property type="project" value="InterPro"/>
</dbReference>
<dbReference type="GO" id="GO:0006412">
    <property type="term" value="P:translation"/>
    <property type="evidence" value="ECO:0007669"/>
    <property type="project" value="UniProtKB-UniRule"/>
</dbReference>
<dbReference type="FunFam" id="4.10.640.10:FF:000002">
    <property type="entry name" value="30S ribosomal protein S18, chloroplastic"/>
    <property type="match status" value="1"/>
</dbReference>
<dbReference type="Gene3D" id="4.10.640.10">
    <property type="entry name" value="Ribosomal protein S18"/>
    <property type="match status" value="1"/>
</dbReference>
<dbReference type="HAMAP" id="MF_00270">
    <property type="entry name" value="Ribosomal_bS18"/>
    <property type="match status" value="1"/>
</dbReference>
<dbReference type="InterPro" id="IPR001648">
    <property type="entry name" value="Ribosomal_bS18"/>
</dbReference>
<dbReference type="InterPro" id="IPR018275">
    <property type="entry name" value="Ribosomal_bS18_CS"/>
</dbReference>
<dbReference type="InterPro" id="IPR036870">
    <property type="entry name" value="Ribosomal_bS18_sf"/>
</dbReference>
<dbReference type="NCBIfam" id="TIGR00165">
    <property type="entry name" value="S18"/>
    <property type="match status" value="1"/>
</dbReference>
<dbReference type="PANTHER" id="PTHR13479">
    <property type="entry name" value="30S RIBOSOMAL PROTEIN S18"/>
    <property type="match status" value="1"/>
</dbReference>
<dbReference type="PANTHER" id="PTHR13479:SF40">
    <property type="entry name" value="SMALL RIBOSOMAL SUBUNIT PROTEIN BS18M"/>
    <property type="match status" value="1"/>
</dbReference>
<dbReference type="Pfam" id="PF01084">
    <property type="entry name" value="Ribosomal_S18"/>
    <property type="match status" value="1"/>
</dbReference>
<dbReference type="PRINTS" id="PR00974">
    <property type="entry name" value="RIBOSOMALS18"/>
</dbReference>
<dbReference type="SUPFAM" id="SSF46911">
    <property type="entry name" value="Ribosomal protein S18"/>
    <property type="match status" value="1"/>
</dbReference>
<dbReference type="PROSITE" id="PS00057">
    <property type="entry name" value="RIBOSOMAL_S18"/>
    <property type="match status" value="1"/>
</dbReference>
<reference key="1">
    <citation type="journal article" date="1999" name="J. Mol. Evol.">
        <title>The plastid genome of the cryptophyte alga, Guillardia theta: complete sequence and conserved synteny groups confirm its common ancestry with red algae.</title>
        <authorList>
            <person name="Douglas S.E."/>
            <person name="Penny S.L."/>
        </authorList>
    </citation>
    <scope>NUCLEOTIDE SEQUENCE [LARGE SCALE GENOMIC DNA]</scope>
</reference>
<accession>O78488</accession>
<organism>
    <name type="scientific">Guillardia theta</name>
    <name type="common">Cryptophyte</name>
    <name type="synonym">Cryptomonas phi</name>
    <dbReference type="NCBI Taxonomy" id="55529"/>
    <lineage>
        <taxon>Eukaryota</taxon>
        <taxon>Cryptophyceae</taxon>
        <taxon>Pyrenomonadales</taxon>
        <taxon>Geminigeraceae</taxon>
        <taxon>Guillardia</taxon>
    </lineage>
</organism>
<name>RR18_GUITH</name>